<keyword id="KW-0342">GTP-binding</keyword>
<keyword id="KW-0378">Hydrolase</keyword>
<keyword id="KW-0479">Metal-binding</keyword>
<keyword id="KW-0547">Nucleotide-binding</keyword>
<keyword id="KW-0554">One-carbon metabolism</keyword>
<keyword id="KW-1185">Reference proteome</keyword>
<keyword id="KW-0862">Zinc</keyword>
<accession>Q8XZK8</accession>
<feature type="chain" id="PRO_0000119434" description="GTP cyclohydrolase 1">
    <location>
        <begin position="1"/>
        <end position="209"/>
    </location>
</feature>
<feature type="binding site" evidence="2">
    <location>
        <position position="100"/>
    </location>
    <ligand>
        <name>Zn(2+)</name>
        <dbReference type="ChEBI" id="CHEBI:29105"/>
    </ligand>
</feature>
<feature type="binding site" evidence="2">
    <location>
        <position position="103"/>
    </location>
    <ligand>
        <name>Zn(2+)</name>
        <dbReference type="ChEBI" id="CHEBI:29105"/>
    </ligand>
</feature>
<feature type="binding site" evidence="2">
    <location>
        <position position="171"/>
    </location>
    <ligand>
        <name>Zn(2+)</name>
        <dbReference type="ChEBI" id="CHEBI:29105"/>
    </ligand>
</feature>
<dbReference type="EC" id="3.5.4.16" evidence="2"/>
<dbReference type="EMBL" id="AL646052">
    <property type="protein sequence ID" value="CAD15089.1"/>
    <property type="molecule type" value="Genomic_DNA"/>
</dbReference>
<dbReference type="RefSeq" id="WP_011001336.1">
    <property type="nucleotide sequence ID" value="NC_003295.1"/>
</dbReference>
<dbReference type="SMR" id="Q8XZK8"/>
<dbReference type="STRING" id="267608.RSc1387"/>
<dbReference type="EnsemblBacteria" id="CAD15089">
    <property type="protein sequence ID" value="CAD15089"/>
    <property type="gene ID" value="RSc1387"/>
</dbReference>
<dbReference type="KEGG" id="rso:RSc1387"/>
<dbReference type="eggNOG" id="COG0302">
    <property type="taxonomic scope" value="Bacteria"/>
</dbReference>
<dbReference type="HOGENOM" id="CLU_049768_3_3_4"/>
<dbReference type="UniPathway" id="UPA00848">
    <property type="reaction ID" value="UER00151"/>
</dbReference>
<dbReference type="Proteomes" id="UP000001436">
    <property type="component" value="Chromosome"/>
</dbReference>
<dbReference type="GO" id="GO:0005737">
    <property type="term" value="C:cytoplasm"/>
    <property type="evidence" value="ECO:0007669"/>
    <property type="project" value="TreeGrafter"/>
</dbReference>
<dbReference type="GO" id="GO:0005525">
    <property type="term" value="F:GTP binding"/>
    <property type="evidence" value="ECO:0007669"/>
    <property type="project" value="UniProtKB-KW"/>
</dbReference>
<dbReference type="GO" id="GO:0003934">
    <property type="term" value="F:GTP cyclohydrolase I activity"/>
    <property type="evidence" value="ECO:0007669"/>
    <property type="project" value="UniProtKB-UniRule"/>
</dbReference>
<dbReference type="GO" id="GO:0008270">
    <property type="term" value="F:zinc ion binding"/>
    <property type="evidence" value="ECO:0007669"/>
    <property type="project" value="UniProtKB-UniRule"/>
</dbReference>
<dbReference type="GO" id="GO:0006730">
    <property type="term" value="P:one-carbon metabolic process"/>
    <property type="evidence" value="ECO:0007669"/>
    <property type="project" value="UniProtKB-UniRule"/>
</dbReference>
<dbReference type="GO" id="GO:0006729">
    <property type="term" value="P:tetrahydrobiopterin biosynthetic process"/>
    <property type="evidence" value="ECO:0007669"/>
    <property type="project" value="TreeGrafter"/>
</dbReference>
<dbReference type="GO" id="GO:0046654">
    <property type="term" value="P:tetrahydrofolate biosynthetic process"/>
    <property type="evidence" value="ECO:0007669"/>
    <property type="project" value="UniProtKB-UniRule"/>
</dbReference>
<dbReference type="Gene3D" id="3.30.1130.10">
    <property type="match status" value="1"/>
</dbReference>
<dbReference type="HAMAP" id="MF_00223">
    <property type="entry name" value="FolE"/>
    <property type="match status" value="1"/>
</dbReference>
<dbReference type="InterPro" id="IPR043133">
    <property type="entry name" value="GTP-CH-I_C/QueF"/>
</dbReference>
<dbReference type="InterPro" id="IPR001474">
    <property type="entry name" value="GTP_CycHdrlase_I"/>
</dbReference>
<dbReference type="InterPro" id="IPR018234">
    <property type="entry name" value="GTP_CycHdrlase_I_CS"/>
</dbReference>
<dbReference type="InterPro" id="IPR020602">
    <property type="entry name" value="GTP_CycHdrlase_I_dom"/>
</dbReference>
<dbReference type="NCBIfam" id="NF006825">
    <property type="entry name" value="PRK09347.1-2"/>
    <property type="match status" value="1"/>
</dbReference>
<dbReference type="NCBIfam" id="NF006826">
    <property type="entry name" value="PRK09347.1-3"/>
    <property type="match status" value="1"/>
</dbReference>
<dbReference type="PANTHER" id="PTHR11109:SF7">
    <property type="entry name" value="GTP CYCLOHYDROLASE 1"/>
    <property type="match status" value="1"/>
</dbReference>
<dbReference type="PANTHER" id="PTHR11109">
    <property type="entry name" value="GTP CYCLOHYDROLASE I"/>
    <property type="match status" value="1"/>
</dbReference>
<dbReference type="Pfam" id="PF01227">
    <property type="entry name" value="GTP_cyclohydroI"/>
    <property type="match status" value="1"/>
</dbReference>
<dbReference type="SUPFAM" id="SSF55620">
    <property type="entry name" value="Tetrahydrobiopterin biosynthesis enzymes-like"/>
    <property type="match status" value="1"/>
</dbReference>
<dbReference type="PROSITE" id="PS00859">
    <property type="entry name" value="GTP_CYCLOHYDROL_1_1"/>
    <property type="match status" value="1"/>
</dbReference>
<organism>
    <name type="scientific">Ralstonia nicotianae (strain ATCC BAA-1114 / GMI1000)</name>
    <name type="common">Ralstonia solanacearum</name>
    <dbReference type="NCBI Taxonomy" id="267608"/>
    <lineage>
        <taxon>Bacteria</taxon>
        <taxon>Pseudomonadati</taxon>
        <taxon>Pseudomonadota</taxon>
        <taxon>Betaproteobacteria</taxon>
        <taxon>Burkholderiales</taxon>
        <taxon>Burkholderiaceae</taxon>
        <taxon>Ralstonia</taxon>
        <taxon>Ralstonia solanacearum species complex</taxon>
    </lineage>
</organism>
<protein>
    <recommendedName>
        <fullName evidence="2">GTP cyclohydrolase 1</fullName>
        <ecNumber evidence="2">3.5.4.16</ecNumber>
    </recommendedName>
    <alternativeName>
        <fullName evidence="2">GTP cyclohydrolase I</fullName>
        <shortName evidence="2">GTP-CH-I</shortName>
    </alternativeName>
</protein>
<reference key="1">
    <citation type="journal article" date="2002" name="Nature">
        <title>Genome sequence of the plant pathogen Ralstonia solanacearum.</title>
        <authorList>
            <person name="Salanoubat M."/>
            <person name="Genin S."/>
            <person name="Artiguenave F."/>
            <person name="Gouzy J."/>
            <person name="Mangenot S."/>
            <person name="Arlat M."/>
            <person name="Billault A."/>
            <person name="Brottier P."/>
            <person name="Camus J.-C."/>
            <person name="Cattolico L."/>
            <person name="Chandler M."/>
            <person name="Choisne N."/>
            <person name="Claudel-Renard C."/>
            <person name="Cunnac S."/>
            <person name="Demange N."/>
            <person name="Gaspin C."/>
            <person name="Lavie M."/>
            <person name="Moisan A."/>
            <person name="Robert C."/>
            <person name="Saurin W."/>
            <person name="Schiex T."/>
            <person name="Siguier P."/>
            <person name="Thebault P."/>
            <person name="Whalen M."/>
            <person name="Wincker P."/>
            <person name="Levy M."/>
            <person name="Weissenbach J."/>
            <person name="Boucher C.A."/>
        </authorList>
    </citation>
    <scope>NUCLEOTIDE SEQUENCE [LARGE SCALE GENOMIC DNA]</scope>
    <source>
        <strain>ATCC BAA-1114 / GMI1000</strain>
    </source>
</reference>
<comment type="catalytic activity">
    <reaction evidence="2">
        <text>GTP + H2O = 7,8-dihydroneopterin 3'-triphosphate + formate + H(+)</text>
        <dbReference type="Rhea" id="RHEA:17473"/>
        <dbReference type="ChEBI" id="CHEBI:15377"/>
        <dbReference type="ChEBI" id="CHEBI:15378"/>
        <dbReference type="ChEBI" id="CHEBI:15740"/>
        <dbReference type="ChEBI" id="CHEBI:37565"/>
        <dbReference type="ChEBI" id="CHEBI:58462"/>
        <dbReference type="EC" id="3.5.4.16"/>
    </reaction>
</comment>
<comment type="pathway">
    <text evidence="2">Cofactor biosynthesis; 7,8-dihydroneopterin triphosphate biosynthesis; 7,8-dihydroneopterin triphosphate from GTP: step 1/1.</text>
</comment>
<comment type="subunit">
    <text evidence="1">Toroid-shaped homodecamer, composed of two pentamers of five dimers.</text>
</comment>
<comment type="similarity">
    <text evidence="2">Belongs to the GTP cyclohydrolase I family.</text>
</comment>
<sequence>MLCSHDDDDPIRTAASHGIRRVRAFDAQRFELAVQSLLEASGIEIDTAHTGKTAQRVRELWQRRLLDGYDIDPAEALGHGFEDPRRDMVIIRSIAVHGVCPHHLLPFRGVAHVAYLPDGRLHGFGRIARMIDAISHRYTYQEWVTNEVAHALVAHGQARGAACLIEAEQLCLLMGENRRGDERVITQCYVGEFEQNMQARTEFLRAIKG</sequence>
<evidence type="ECO:0000250" key="1"/>
<evidence type="ECO:0000255" key="2">
    <source>
        <dbReference type="HAMAP-Rule" id="MF_00223"/>
    </source>
</evidence>
<gene>
    <name evidence="2" type="primary">folE</name>
    <name type="ordered locus">RSc1387</name>
    <name type="ORF">RS04670</name>
</gene>
<name>GCH1_RALN1</name>
<proteinExistence type="inferred from homology"/>